<evidence type="ECO:0000255" key="1">
    <source>
        <dbReference type="HAMAP-Rule" id="MF_01321"/>
    </source>
</evidence>
<sequence>MVYSYTEKKRIRKDFGKRPQVLDVPYLLSIQLDSFQKFIEQDPEGQYGLEAAFRSVFPIQSYSGNSELQYVSYRLGEPVFDVQECQIRGVTYSAPLRVKLRLVIYEREAPEGTVKDIKEQEVYMGEIPLMTDNGTFVINGTERVIVSQLHRSPGVFFDSDKGKTHSSGKVLYNARIIPYRGSWLDFEFDPKDNLFVRIDRRRKLPATIILRALNYTTEQILDLFFEKVIFEIRDNKLQMELVPERLRGETASFDIEANGKVYVEKGRRITARHIRQLEKDDVKLIEVPVEYIAGKVVAKDYIDESTGELICAANMELSLDLLAKLSQSGHKRIETLFTNDLDHGPYISETLRVDPTNDRLSALVEIYRMMRPGEPPTREAAESLFENLFFSEDRYDLSAVGRMKFNRSLLREEIEGSGILSKDDIIDVMKKLIDIRNGKGEVDDIDHLGNRRIRSVGEMAENQFRVGLVRVERAVKERLSLGDLDTLMPQDMINAKPISAAVKEFFGSSQLSQFMDQNNPLSEITHKRRISALGPGGLTRERAGFEVRDVHPTHYGRVCPIETPEGPNIGLINSLSVYAQTNEYGFLETPYRKVTDGVVTDEIHYLSAIEEGNYVIAQANSNLDEEGHFVEDLVTCRSKGESSLFSRDQVDYMDVSTQQVVSVGASLIPFLEHDDANRALMGANMQRQAVPTLRADKPLVGTGMERAVAVDSGVTAVAKRGGVVQYVDASRIVIKVNEDEMYPGEAGIDIYNLTKYTRSNQNTCINQMPCVSLGEPVERGDVLADGPSTDLGELALGQNMRVAFMPWNGYNFEDSILVSERVVQEDRFTTIHIQELACVSRDTKLGPEEITADIPNVGEAALSKLDESGIVYIGAEVTGGDILVGKVTPKGETQLTPEEKLLRAIFGEKASDVKDSSLRVPNGVSGTVIDVQVFTRDGVEKDKRALEIEEMQLKQAKKDLSEELQILEAGLFSRIRAVLVAGGVEAEKLDKLPRDRWLELGLTDEEKQNQLEQLAEQYDELKHEFEKKLEAKRRKITQGDDLAPGVLKIVKGYLAVKRRIQPGDKMAGRHGNKGVISKINPIEDMPYDENGTPVDIVLNPLGVPSRMNIGQILETHLGMAAKGIGDKINAMLKQQQEVAKLREFIQRAYDLGADVRQKVDLSTFSDEEVMRLAENLRKGMPIATPVFDGAKEAEIKELLKLGDLPTSGQIRLYDGRTGEQFERPVTVGYMYMLKLNHLVDDKMHARSTGSYSLVTQQPLGGKAQFGGQRFGEMEVWALEAYGAAYTLQEMLTVKSDDVNGRTKMYKNIVDGNHQMEPGMPESFNVLLKEIRSLGINIELEDE</sequence>
<dbReference type="EC" id="2.7.7.6" evidence="1"/>
<dbReference type="EMBL" id="CP000266">
    <property type="protein sequence ID" value="ABF06052.1"/>
    <property type="molecule type" value="Genomic_DNA"/>
</dbReference>
<dbReference type="RefSeq" id="WP_011587284.1">
    <property type="nucleotide sequence ID" value="NC_008258.1"/>
</dbReference>
<dbReference type="SMR" id="Q0SY13"/>
<dbReference type="KEGG" id="sfv:SFV_4059"/>
<dbReference type="HOGENOM" id="CLU_000524_4_0_6"/>
<dbReference type="Proteomes" id="UP000000659">
    <property type="component" value="Chromosome"/>
</dbReference>
<dbReference type="GO" id="GO:0000428">
    <property type="term" value="C:DNA-directed RNA polymerase complex"/>
    <property type="evidence" value="ECO:0007669"/>
    <property type="project" value="UniProtKB-KW"/>
</dbReference>
<dbReference type="GO" id="GO:0003677">
    <property type="term" value="F:DNA binding"/>
    <property type="evidence" value="ECO:0007669"/>
    <property type="project" value="UniProtKB-UniRule"/>
</dbReference>
<dbReference type="GO" id="GO:0003899">
    <property type="term" value="F:DNA-directed RNA polymerase activity"/>
    <property type="evidence" value="ECO:0007669"/>
    <property type="project" value="UniProtKB-UniRule"/>
</dbReference>
<dbReference type="GO" id="GO:0032549">
    <property type="term" value="F:ribonucleoside binding"/>
    <property type="evidence" value="ECO:0007669"/>
    <property type="project" value="InterPro"/>
</dbReference>
<dbReference type="GO" id="GO:0006351">
    <property type="term" value="P:DNA-templated transcription"/>
    <property type="evidence" value="ECO:0007669"/>
    <property type="project" value="UniProtKB-UniRule"/>
</dbReference>
<dbReference type="CDD" id="cd00653">
    <property type="entry name" value="RNA_pol_B_RPB2"/>
    <property type="match status" value="1"/>
</dbReference>
<dbReference type="FunFam" id="2.30.150.10:FF:000001">
    <property type="entry name" value="DNA-directed RNA polymerase subunit beta"/>
    <property type="match status" value="1"/>
</dbReference>
<dbReference type="FunFam" id="2.40.270.10:FF:000003">
    <property type="entry name" value="DNA-directed RNA polymerase subunit beta"/>
    <property type="match status" value="1"/>
</dbReference>
<dbReference type="FunFam" id="2.40.270.10:FF:000004">
    <property type="entry name" value="DNA-directed RNA polymerase subunit beta"/>
    <property type="match status" value="1"/>
</dbReference>
<dbReference type="FunFam" id="2.40.50.100:FF:000006">
    <property type="entry name" value="DNA-directed RNA polymerase subunit beta"/>
    <property type="match status" value="1"/>
</dbReference>
<dbReference type="FunFam" id="2.40.50.150:FF:000001">
    <property type="entry name" value="DNA-directed RNA polymerase subunit beta"/>
    <property type="match status" value="1"/>
</dbReference>
<dbReference type="FunFam" id="3.90.1100.10:FF:000002">
    <property type="entry name" value="DNA-directed RNA polymerase subunit beta"/>
    <property type="match status" value="1"/>
</dbReference>
<dbReference type="FunFam" id="3.90.1110.10:FF:000001">
    <property type="entry name" value="DNA-directed RNA polymerase subunit beta"/>
    <property type="match status" value="1"/>
</dbReference>
<dbReference type="FunFam" id="3.90.1110.10:FF:000004">
    <property type="entry name" value="DNA-directed RNA polymerase subunit beta"/>
    <property type="match status" value="1"/>
</dbReference>
<dbReference type="FunFam" id="3.90.1800.10:FF:000001">
    <property type="entry name" value="DNA-directed RNA polymerase subunit beta"/>
    <property type="match status" value="1"/>
</dbReference>
<dbReference type="Gene3D" id="2.40.50.100">
    <property type="match status" value="1"/>
</dbReference>
<dbReference type="Gene3D" id="2.40.50.150">
    <property type="match status" value="1"/>
</dbReference>
<dbReference type="Gene3D" id="3.90.1100.10">
    <property type="match status" value="2"/>
</dbReference>
<dbReference type="Gene3D" id="6.10.140.1670">
    <property type="match status" value="1"/>
</dbReference>
<dbReference type="Gene3D" id="2.30.150.10">
    <property type="entry name" value="DNA-directed RNA polymerase, beta subunit, external 1 domain"/>
    <property type="match status" value="1"/>
</dbReference>
<dbReference type="Gene3D" id="2.40.270.10">
    <property type="entry name" value="DNA-directed RNA polymerase, subunit 2, domain 6"/>
    <property type="match status" value="1"/>
</dbReference>
<dbReference type="Gene3D" id="3.90.1800.10">
    <property type="entry name" value="RNA polymerase alpha subunit dimerisation domain"/>
    <property type="match status" value="1"/>
</dbReference>
<dbReference type="Gene3D" id="3.90.1110.10">
    <property type="entry name" value="RNA polymerase Rpb2, domain 2"/>
    <property type="match status" value="1"/>
</dbReference>
<dbReference type="HAMAP" id="MF_01321">
    <property type="entry name" value="RNApol_bact_RpoB"/>
    <property type="match status" value="1"/>
</dbReference>
<dbReference type="InterPro" id="IPR042107">
    <property type="entry name" value="DNA-dir_RNA_pol_bsu_ext_1_sf"/>
</dbReference>
<dbReference type="InterPro" id="IPR019462">
    <property type="entry name" value="DNA-dir_RNA_pol_bsu_external_1"/>
</dbReference>
<dbReference type="InterPro" id="IPR015712">
    <property type="entry name" value="DNA-dir_RNA_pol_su2"/>
</dbReference>
<dbReference type="InterPro" id="IPR007120">
    <property type="entry name" value="DNA-dir_RNAP_su2_dom"/>
</dbReference>
<dbReference type="InterPro" id="IPR037033">
    <property type="entry name" value="DNA-dir_RNAP_su2_hyb_sf"/>
</dbReference>
<dbReference type="InterPro" id="IPR010243">
    <property type="entry name" value="RNA_pol_bsu_bac"/>
</dbReference>
<dbReference type="InterPro" id="IPR007121">
    <property type="entry name" value="RNA_pol_bsu_CS"/>
</dbReference>
<dbReference type="InterPro" id="IPR007644">
    <property type="entry name" value="RNA_pol_bsu_protrusion"/>
</dbReference>
<dbReference type="InterPro" id="IPR007642">
    <property type="entry name" value="RNA_pol_Rpb2_2"/>
</dbReference>
<dbReference type="InterPro" id="IPR037034">
    <property type="entry name" value="RNA_pol_Rpb2_2_sf"/>
</dbReference>
<dbReference type="InterPro" id="IPR007645">
    <property type="entry name" value="RNA_pol_Rpb2_3"/>
</dbReference>
<dbReference type="InterPro" id="IPR007641">
    <property type="entry name" value="RNA_pol_Rpb2_7"/>
</dbReference>
<dbReference type="InterPro" id="IPR014724">
    <property type="entry name" value="RNA_pol_RPB2_OB-fold"/>
</dbReference>
<dbReference type="NCBIfam" id="NF001616">
    <property type="entry name" value="PRK00405.1"/>
    <property type="match status" value="1"/>
</dbReference>
<dbReference type="NCBIfam" id="TIGR02013">
    <property type="entry name" value="rpoB"/>
    <property type="match status" value="1"/>
</dbReference>
<dbReference type="PANTHER" id="PTHR20856">
    <property type="entry name" value="DNA-DIRECTED RNA POLYMERASE I SUBUNIT 2"/>
    <property type="match status" value="1"/>
</dbReference>
<dbReference type="Pfam" id="PF04563">
    <property type="entry name" value="RNA_pol_Rpb2_1"/>
    <property type="match status" value="1"/>
</dbReference>
<dbReference type="Pfam" id="PF04561">
    <property type="entry name" value="RNA_pol_Rpb2_2"/>
    <property type="match status" value="2"/>
</dbReference>
<dbReference type="Pfam" id="PF04565">
    <property type="entry name" value="RNA_pol_Rpb2_3"/>
    <property type="match status" value="1"/>
</dbReference>
<dbReference type="Pfam" id="PF10385">
    <property type="entry name" value="RNA_pol_Rpb2_45"/>
    <property type="match status" value="1"/>
</dbReference>
<dbReference type="Pfam" id="PF00562">
    <property type="entry name" value="RNA_pol_Rpb2_6"/>
    <property type="match status" value="1"/>
</dbReference>
<dbReference type="Pfam" id="PF04560">
    <property type="entry name" value="RNA_pol_Rpb2_7"/>
    <property type="match status" value="1"/>
</dbReference>
<dbReference type="SUPFAM" id="SSF64484">
    <property type="entry name" value="beta and beta-prime subunits of DNA dependent RNA-polymerase"/>
    <property type="match status" value="1"/>
</dbReference>
<dbReference type="PROSITE" id="PS01166">
    <property type="entry name" value="RNA_POL_BETA"/>
    <property type="match status" value="1"/>
</dbReference>
<accession>Q0SY13</accession>
<name>RPOB_SHIF8</name>
<comment type="function">
    <text evidence="1">DNA-dependent RNA polymerase catalyzes the transcription of DNA into RNA using the four ribonucleoside triphosphates as substrates.</text>
</comment>
<comment type="catalytic activity">
    <reaction evidence="1">
        <text>RNA(n) + a ribonucleoside 5'-triphosphate = RNA(n+1) + diphosphate</text>
        <dbReference type="Rhea" id="RHEA:21248"/>
        <dbReference type="Rhea" id="RHEA-COMP:14527"/>
        <dbReference type="Rhea" id="RHEA-COMP:17342"/>
        <dbReference type="ChEBI" id="CHEBI:33019"/>
        <dbReference type="ChEBI" id="CHEBI:61557"/>
        <dbReference type="ChEBI" id="CHEBI:140395"/>
        <dbReference type="EC" id="2.7.7.6"/>
    </reaction>
</comment>
<comment type="subunit">
    <text evidence="1">The RNAP catalytic core consists of 2 alpha, 1 beta, 1 beta' and 1 omega subunit. When a sigma factor is associated with the core the holoenzyme is formed, which can initiate transcription.</text>
</comment>
<comment type="similarity">
    <text evidence="1">Belongs to the RNA polymerase beta chain family.</text>
</comment>
<reference key="1">
    <citation type="journal article" date="2006" name="BMC Genomics">
        <title>Complete genome sequence of Shigella flexneri 5b and comparison with Shigella flexneri 2a.</title>
        <authorList>
            <person name="Nie H."/>
            <person name="Yang F."/>
            <person name="Zhang X."/>
            <person name="Yang J."/>
            <person name="Chen L."/>
            <person name="Wang J."/>
            <person name="Xiong Z."/>
            <person name="Peng J."/>
            <person name="Sun L."/>
            <person name="Dong J."/>
            <person name="Xue Y."/>
            <person name="Xu X."/>
            <person name="Chen S."/>
            <person name="Yao Z."/>
            <person name="Shen Y."/>
            <person name="Jin Q."/>
        </authorList>
    </citation>
    <scope>NUCLEOTIDE SEQUENCE [LARGE SCALE GENOMIC DNA]</scope>
    <source>
        <strain>8401</strain>
    </source>
</reference>
<keyword id="KW-0007">Acetylation</keyword>
<keyword id="KW-0240">DNA-directed RNA polymerase</keyword>
<keyword id="KW-0548">Nucleotidyltransferase</keyword>
<keyword id="KW-0804">Transcription</keyword>
<keyword id="KW-0808">Transferase</keyword>
<protein>
    <recommendedName>
        <fullName evidence="1">DNA-directed RNA polymerase subunit beta</fullName>
        <shortName evidence="1">RNAP subunit beta</shortName>
        <ecNumber evidence="1">2.7.7.6</ecNumber>
    </recommendedName>
    <alternativeName>
        <fullName evidence="1">RNA polymerase subunit beta</fullName>
    </alternativeName>
    <alternativeName>
        <fullName evidence="1">Transcriptase subunit beta</fullName>
    </alternativeName>
</protein>
<organism>
    <name type="scientific">Shigella flexneri serotype 5b (strain 8401)</name>
    <dbReference type="NCBI Taxonomy" id="373384"/>
    <lineage>
        <taxon>Bacteria</taxon>
        <taxon>Pseudomonadati</taxon>
        <taxon>Pseudomonadota</taxon>
        <taxon>Gammaproteobacteria</taxon>
        <taxon>Enterobacterales</taxon>
        <taxon>Enterobacteriaceae</taxon>
        <taxon>Shigella</taxon>
    </lineage>
</organism>
<feature type="chain" id="PRO_0000300404" description="DNA-directed RNA polymerase subunit beta">
    <location>
        <begin position="1"/>
        <end position="1342"/>
    </location>
</feature>
<feature type="modified residue" description="N6-acetyllysine" evidence="1">
    <location>
        <position position="1022"/>
    </location>
</feature>
<feature type="modified residue" description="N6-acetyllysine" evidence="1">
    <location>
        <position position="1200"/>
    </location>
</feature>
<proteinExistence type="inferred from homology"/>
<gene>
    <name evidence="1" type="primary">rpoB</name>
    <name type="ordered locus">SFV_4059</name>
</gene>